<keyword id="KW-0001">2Fe-2S</keyword>
<keyword id="KW-0028">Amino-acid biosynthesis</keyword>
<keyword id="KW-0100">Branched-chain amino acid biosynthesis</keyword>
<keyword id="KW-0408">Iron</keyword>
<keyword id="KW-0411">Iron-sulfur</keyword>
<keyword id="KW-0456">Lyase</keyword>
<keyword id="KW-0460">Magnesium</keyword>
<keyword id="KW-0479">Metal-binding</keyword>
<name>ILVD_SODGM</name>
<evidence type="ECO:0000255" key="1">
    <source>
        <dbReference type="HAMAP-Rule" id="MF_00012"/>
    </source>
</evidence>
<reference key="1">
    <citation type="journal article" date="2006" name="Genome Res.">
        <title>Massive genome erosion and functional adaptations provide insights into the symbiotic lifestyle of Sodalis glossinidius in the tsetse host.</title>
        <authorList>
            <person name="Toh H."/>
            <person name="Weiss B.L."/>
            <person name="Perkin S.A.H."/>
            <person name="Yamashita A."/>
            <person name="Oshima K."/>
            <person name="Hattori M."/>
            <person name="Aksoy S."/>
        </authorList>
    </citation>
    <scope>NUCLEOTIDE SEQUENCE [LARGE SCALE GENOMIC DNA]</scope>
    <source>
        <strain>morsitans</strain>
    </source>
</reference>
<organism>
    <name type="scientific">Sodalis glossinidius (strain morsitans)</name>
    <dbReference type="NCBI Taxonomy" id="343509"/>
    <lineage>
        <taxon>Bacteria</taxon>
        <taxon>Pseudomonadati</taxon>
        <taxon>Pseudomonadota</taxon>
        <taxon>Gammaproteobacteria</taxon>
        <taxon>Enterobacterales</taxon>
        <taxon>Bruguierivoracaceae</taxon>
        <taxon>Sodalis</taxon>
    </lineage>
</organism>
<protein>
    <recommendedName>
        <fullName evidence="1">Dihydroxy-acid dehydratase</fullName>
        <shortName evidence="1">DAD</shortName>
        <ecNumber evidence="1">4.2.1.9</ecNumber>
    </recommendedName>
</protein>
<proteinExistence type="inferred from homology"/>
<accession>Q2NQA6</accession>
<gene>
    <name evidence="1" type="primary">ilvD</name>
    <name type="ordered locus">SG2394</name>
</gene>
<comment type="function">
    <text evidence="1">Functions in the biosynthesis of branched-chain amino acids. Catalyzes the dehydration of (2R,3R)-2,3-dihydroxy-3-methylpentanoate (2,3-dihydroxy-3-methylvalerate) into 2-oxo-3-methylpentanoate (2-oxo-3-methylvalerate) and of (2R)-2,3-dihydroxy-3-methylbutanoate (2,3-dihydroxyisovalerate) into 2-oxo-3-methylbutanoate (2-oxoisovalerate), the penultimate precursor to L-isoleucine and L-valine, respectively.</text>
</comment>
<comment type="catalytic activity">
    <reaction evidence="1">
        <text>(2R)-2,3-dihydroxy-3-methylbutanoate = 3-methyl-2-oxobutanoate + H2O</text>
        <dbReference type="Rhea" id="RHEA:24809"/>
        <dbReference type="ChEBI" id="CHEBI:11851"/>
        <dbReference type="ChEBI" id="CHEBI:15377"/>
        <dbReference type="ChEBI" id="CHEBI:49072"/>
        <dbReference type="EC" id="4.2.1.9"/>
    </reaction>
    <physiologicalReaction direction="left-to-right" evidence="1">
        <dbReference type="Rhea" id="RHEA:24810"/>
    </physiologicalReaction>
</comment>
<comment type="catalytic activity">
    <reaction evidence="1">
        <text>(2R,3R)-2,3-dihydroxy-3-methylpentanoate = (S)-3-methyl-2-oxopentanoate + H2O</text>
        <dbReference type="Rhea" id="RHEA:27694"/>
        <dbReference type="ChEBI" id="CHEBI:15377"/>
        <dbReference type="ChEBI" id="CHEBI:35146"/>
        <dbReference type="ChEBI" id="CHEBI:49258"/>
        <dbReference type="EC" id="4.2.1.9"/>
    </reaction>
    <physiologicalReaction direction="left-to-right" evidence="1">
        <dbReference type="Rhea" id="RHEA:27695"/>
    </physiologicalReaction>
</comment>
<comment type="cofactor">
    <cofactor evidence="1">
        <name>[2Fe-2S] cluster</name>
        <dbReference type="ChEBI" id="CHEBI:190135"/>
    </cofactor>
    <text evidence="1">Binds 1 [2Fe-2S] cluster per subunit. This cluster acts as a Lewis acid cofactor.</text>
</comment>
<comment type="cofactor">
    <cofactor evidence="1">
        <name>Mg(2+)</name>
        <dbReference type="ChEBI" id="CHEBI:18420"/>
    </cofactor>
</comment>
<comment type="pathway">
    <text evidence="1">Amino-acid biosynthesis; L-isoleucine biosynthesis; L-isoleucine from 2-oxobutanoate: step 3/4.</text>
</comment>
<comment type="pathway">
    <text evidence="1">Amino-acid biosynthesis; L-valine biosynthesis; L-valine from pyruvate: step 3/4.</text>
</comment>
<comment type="subunit">
    <text evidence="1">Homodimer.</text>
</comment>
<comment type="similarity">
    <text evidence="1">Belongs to the IlvD/Edd family.</text>
</comment>
<feature type="chain" id="PRO_1000001063" description="Dihydroxy-acid dehydratase">
    <location>
        <begin position="1"/>
        <end position="616"/>
    </location>
</feature>
<feature type="active site" description="Proton acceptor" evidence="1">
    <location>
        <position position="517"/>
    </location>
</feature>
<feature type="binding site" evidence="1">
    <location>
        <position position="81"/>
    </location>
    <ligand>
        <name>Mg(2+)</name>
        <dbReference type="ChEBI" id="CHEBI:18420"/>
    </ligand>
</feature>
<feature type="binding site" evidence="1">
    <location>
        <position position="122"/>
    </location>
    <ligand>
        <name>[2Fe-2S] cluster</name>
        <dbReference type="ChEBI" id="CHEBI:190135"/>
    </ligand>
</feature>
<feature type="binding site" evidence="1">
    <location>
        <position position="123"/>
    </location>
    <ligand>
        <name>Mg(2+)</name>
        <dbReference type="ChEBI" id="CHEBI:18420"/>
    </ligand>
</feature>
<feature type="binding site" description="via carbamate group" evidence="1">
    <location>
        <position position="124"/>
    </location>
    <ligand>
        <name>Mg(2+)</name>
        <dbReference type="ChEBI" id="CHEBI:18420"/>
    </ligand>
</feature>
<feature type="binding site" evidence="1">
    <location>
        <position position="195"/>
    </location>
    <ligand>
        <name>[2Fe-2S] cluster</name>
        <dbReference type="ChEBI" id="CHEBI:190135"/>
    </ligand>
</feature>
<feature type="binding site" evidence="1">
    <location>
        <position position="491"/>
    </location>
    <ligand>
        <name>Mg(2+)</name>
        <dbReference type="ChEBI" id="CHEBI:18420"/>
    </ligand>
</feature>
<feature type="modified residue" description="N6-carboxylysine" evidence="1">
    <location>
        <position position="124"/>
    </location>
</feature>
<dbReference type="EC" id="4.2.1.9" evidence="1"/>
<dbReference type="EMBL" id="AP008232">
    <property type="protein sequence ID" value="BAE75669.1"/>
    <property type="molecule type" value="Genomic_DNA"/>
</dbReference>
<dbReference type="RefSeq" id="WP_011412200.1">
    <property type="nucleotide sequence ID" value="NC_007712.1"/>
</dbReference>
<dbReference type="SMR" id="Q2NQA6"/>
<dbReference type="STRING" id="343509.SG2394"/>
<dbReference type="KEGG" id="sgl:SG2394"/>
<dbReference type="eggNOG" id="COG0129">
    <property type="taxonomic scope" value="Bacteria"/>
</dbReference>
<dbReference type="HOGENOM" id="CLU_014271_4_2_6"/>
<dbReference type="OrthoDB" id="9807077at2"/>
<dbReference type="BioCyc" id="SGLO343509:SGP1_RS21725-MONOMER"/>
<dbReference type="UniPathway" id="UPA00047">
    <property type="reaction ID" value="UER00057"/>
</dbReference>
<dbReference type="UniPathway" id="UPA00049">
    <property type="reaction ID" value="UER00061"/>
</dbReference>
<dbReference type="Proteomes" id="UP000001932">
    <property type="component" value="Chromosome"/>
</dbReference>
<dbReference type="GO" id="GO:0005829">
    <property type="term" value="C:cytosol"/>
    <property type="evidence" value="ECO:0007669"/>
    <property type="project" value="TreeGrafter"/>
</dbReference>
<dbReference type="GO" id="GO:0051537">
    <property type="term" value="F:2 iron, 2 sulfur cluster binding"/>
    <property type="evidence" value="ECO:0007669"/>
    <property type="project" value="UniProtKB-UniRule"/>
</dbReference>
<dbReference type="GO" id="GO:0004160">
    <property type="term" value="F:dihydroxy-acid dehydratase activity"/>
    <property type="evidence" value="ECO:0007669"/>
    <property type="project" value="UniProtKB-UniRule"/>
</dbReference>
<dbReference type="GO" id="GO:0000287">
    <property type="term" value="F:magnesium ion binding"/>
    <property type="evidence" value="ECO:0007669"/>
    <property type="project" value="UniProtKB-UniRule"/>
</dbReference>
<dbReference type="GO" id="GO:0009097">
    <property type="term" value="P:isoleucine biosynthetic process"/>
    <property type="evidence" value="ECO:0007669"/>
    <property type="project" value="UniProtKB-UniRule"/>
</dbReference>
<dbReference type="GO" id="GO:0009099">
    <property type="term" value="P:L-valine biosynthetic process"/>
    <property type="evidence" value="ECO:0007669"/>
    <property type="project" value="UniProtKB-UniRule"/>
</dbReference>
<dbReference type="FunFam" id="3.50.30.80:FF:000001">
    <property type="entry name" value="Dihydroxy-acid dehydratase"/>
    <property type="match status" value="1"/>
</dbReference>
<dbReference type="Gene3D" id="3.50.30.80">
    <property type="entry name" value="IlvD/EDD C-terminal domain-like"/>
    <property type="match status" value="1"/>
</dbReference>
<dbReference type="HAMAP" id="MF_00012">
    <property type="entry name" value="IlvD"/>
    <property type="match status" value="1"/>
</dbReference>
<dbReference type="InterPro" id="IPR042096">
    <property type="entry name" value="Dihydro-acid_dehy_C"/>
</dbReference>
<dbReference type="InterPro" id="IPR004404">
    <property type="entry name" value="DihydroxyA_deHydtase"/>
</dbReference>
<dbReference type="InterPro" id="IPR020558">
    <property type="entry name" value="DiOHA_6PGluconate_deHydtase_CS"/>
</dbReference>
<dbReference type="InterPro" id="IPR056740">
    <property type="entry name" value="ILV_EDD_C"/>
</dbReference>
<dbReference type="InterPro" id="IPR000581">
    <property type="entry name" value="ILV_EDD_N"/>
</dbReference>
<dbReference type="InterPro" id="IPR037237">
    <property type="entry name" value="IlvD/EDD_N"/>
</dbReference>
<dbReference type="NCBIfam" id="TIGR00110">
    <property type="entry name" value="ilvD"/>
    <property type="match status" value="1"/>
</dbReference>
<dbReference type="NCBIfam" id="NF009103">
    <property type="entry name" value="PRK12448.1"/>
    <property type="match status" value="1"/>
</dbReference>
<dbReference type="PANTHER" id="PTHR43661">
    <property type="entry name" value="D-XYLONATE DEHYDRATASE"/>
    <property type="match status" value="1"/>
</dbReference>
<dbReference type="PANTHER" id="PTHR43661:SF3">
    <property type="entry name" value="D-XYLONATE DEHYDRATASE YAGF-RELATED"/>
    <property type="match status" value="1"/>
</dbReference>
<dbReference type="Pfam" id="PF24877">
    <property type="entry name" value="ILV_EDD_C"/>
    <property type="match status" value="1"/>
</dbReference>
<dbReference type="Pfam" id="PF00920">
    <property type="entry name" value="ILVD_EDD_N"/>
    <property type="match status" value="1"/>
</dbReference>
<dbReference type="SUPFAM" id="SSF143975">
    <property type="entry name" value="IlvD/EDD N-terminal domain-like"/>
    <property type="match status" value="1"/>
</dbReference>
<dbReference type="SUPFAM" id="SSF52016">
    <property type="entry name" value="LeuD/IlvD-like"/>
    <property type="match status" value="1"/>
</dbReference>
<dbReference type="PROSITE" id="PS00886">
    <property type="entry name" value="ILVD_EDD_1"/>
    <property type="match status" value="1"/>
</dbReference>
<dbReference type="PROSITE" id="PS00887">
    <property type="entry name" value="ILVD_EDD_2"/>
    <property type="match status" value="1"/>
</dbReference>
<sequence length="616" mass="64895">MPKYRSATTTHGRNMAGARALWRATGMTDDDFGKPIIAVVNSFTQFVPGHVHLRDLGKLVAEQIEASGGVAKEFNTIAVDDGIAMGHGGMLYSLPSRELIADSVEYMVNAHCADAMVCISNCDKITPGMLMASLRLNIPVIFVSGGPMEAGKTKLLDKIIKLDLIDAMIQGANPDVSDEDSNQIERSACPTCGSCSGMFTANSMNCLTEALGLSQPGNGSLLATHADRKQLFLNAGERIVGLAKRYYEQDDTSALPRSIASKAAFENAMTLDIAMGGSTNTVLHLLAAAQEGEVDFTMADIDRLSRKVPHLCKVAPSTQKYHMEDVHRSGGVIGILGELGRSGLLNGDVHNVLGLSLPETLARYDVMVSDDAAVKSMYAAGPAGIRTTQAFSQDCRWPSLDTDRQEGCIRAREFAYSQDGGLAVLYGNIAEDGCIVKTAGVDKGSLVFRGPAKVYESQEAASEAILGGKVVAGDVVVIRYEGPKGGPGMQEMLYPTTFLKSVGLGKSCALITDGRFSGGTSGLSIGHVSPEAASGGLIGLVRDGDIIDINIAGRGIVLDVADSELAARRETELARGAAAWTPVARERQVSFALKAYASLATSADKGAVRDKAKLGG</sequence>